<evidence type="ECO:0000250" key="1"/>
<evidence type="ECO:0000250" key="2">
    <source>
        <dbReference type="UniProtKB" id="Q04609"/>
    </source>
</evidence>
<evidence type="ECO:0000250" key="3">
    <source>
        <dbReference type="UniProtKB" id="Q9Y3Q0"/>
    </source>
</evidence>
<evidence type="ECO:0000255" key="4"/>
<evidence type="ECO:0000269" key="5">
    <source>
    </source>
</evidence>
<evidence type="ECO:0000269" key="6">
    <source>
    </source>
</evidence>
<evidence type="ECO:0000305" key="7"/>
<gene>
    <name type="primary">Naalad2</name>
</gene>
<name>NALD2_MOUSE</name>
<reference key="1">
    <citation type="journal article" date="2004" name="J. Neurochem.">
        <title>The cloning and characterization of a second brain enzyme with NAAG peptidase activity.</title>
        <authorList>
            <person name="Bzdega T."/>
            <person name="Crowe S.L."/>
            <person name="Ramadan E.R."/>
            <person name="Sciarretta K.H."/>
            <person name="Olszewski R.T."/>
            <person name="Ojeifo O.A."/>
            <person name="Rafalski V.A."/>
            <person name="Wroblewska B."/>
            <person name="Neale J.H."/>
        </authorList>
    </citation>
    <scope>NUCLEOTIDE SEQUENCE [MRNA]</scope>
    <scope>FUNCTION</scope>
    <scope>TISSUE SPECIFICITY</scope>
    <source>
        <strain>C57BL/6J</strain>
    </source>
</reference>
<reference key="2">
    <citation type="journal article" date="2005" name="Science">
        <title>The transcriptional landscape of the mammalian genome.</title>
        <authorList>
            <person name="Carninci P."/>
            <person name="Kasukawa T."/>
            <person name="Katayama S."/>
            <person name="Gough J."/>
            <person name="Frith M.C."/>
            <person name="Maeda N."/>
            <person name="Oyama R."/>
            <person name="Ravasi T."/>
            <person name="Lenhard B."/>
            <person name="Wells C."/>
            <person name="Kodzius R."/>
            <person name="Shimokawa K."/>
            <person name="Bajic V.B."/>
            <person name="Brenner S.E."/>
            <person name="Batalov S."/>
            <person name="Forrest A.R."/>
            <person name="Zavolan M."/>
            <person name="Davis M.J."/>
            <person name="Wilming L.G."/>
            <person name="Aidinis V."/>
            <person name="Allen J.E."/>
            <person name="Ambesi-Impiombato A."/>
            <person name="Apweiler R."/>
            <person name="Aturaliya R.N."/>
            <person name="Bailey T.L."/>
            <person name="Bansal M."/>
            <person name="Baxter L."/>
            <person name="Beisel K.W."/>
            <person name="Bersano T."/>
            <person name="Bono H."/>
            <person name="Chalk A.M."/>
            <person name="Chiu K.P."/>
            <person name="Choudhary V."/>
            <person name="Christoffels A."/>
            <person name="Clutterbuck D.R."/>
            <person name="Crowe M.L."/>
            <person name="Dalla E."/>
            <person name="Dalrymple B.P."/>
            <person name="de Bono B."/>
            <person name="Della Gatta G."/>
            <person name="di Bernardo D."/>
            <person name="Down T."/>
            <person name="Engstrom P."/>
            <person name="Fagiolini M."/>
            <person name="Faulkner G."/>
            <person name="Fletcher C.F."/>
            <person name="Fukushima T."/>
            <person name="Furuno M."/>
            <person name="Futaki S."/>
            <person name="Gariboldi M."/>
            <person name="Georgii-Hemming P."/>
            <person name="Gingeras T.R."/>
            <person name="Gojobori T."/>
            <person name="Green R.E."/>
            <person name="Gustincich S."/>
            <person name="Harbers M."/>
            <person name="Hayashi Y."/>
            <person name="Hensch T.K."/>
            <person name="Hirokawa N."/>
            <person name="Hill D."/>
            <person name="Huminiecki L."/>
            <person name="Iacono M."/>
            <person name="Ikeo K."/>
            <person name="Iwama A."/>
            <person name="Ishikawa T."/>
            <person name="Jakt M."/>
            <person name="Kanapin A."/>
            <person name="Katoh M."/>
            <person name="Kawasawa Y."/>
            <person name="Kelso J."/>
            <person name="Kitamura H."/>
            <person name="Kitano H."/>
            <person name="Kollias G."/>
            <person name="Krishnan S.P."/>
            <person name="Kruger A."/>
            <person name="Kummerfeld S.K."/>
            <person name="Kurochkin I.V."/>
            <person name="Lareau L.F."/>
            <person name="Lazarevic D."/>
            <person name="Lipovich L."/>
            <person name="Liu J."/>
            <person name="Liuni S."/>
            <person name="McWilliam S."/>
            <person name="Madan Babu M."/>
            <person name="Madera M."/>
            <person name="Marchionni L."/>
            <person name="Matsuda H."/>
            <person name="Matsuzawa S."/>
            <person name="Miki H."/>
            <person name="Mignone F."/>
            <person name="Miyake S."/>
            <person name="Morris K."/>
            <person name="Mottagui-Tabar S."/>
            <person name="Mulder N."/>
            <person name="Nakano N."/>
            <person name="Nakauchi H."/>
            <person name="Ng P."/>
            <person name="Nilsson R."/>
            <person name="Nishiguchi S."/>
            <person name="Nishikawa S."/>
            <person name="Nori F."/>
            <person name="Ohara O."/>
            <person name="Okazaki Y."/>
            <person name="Orlando V."/>
            <person name="Pang K.C."/>
            <person name="Pavan W.J."/>
            <person name="Pavesi G."/>
            <person name="Pesole G."/>
            <person name="Petrovsky N."/>
            <person name="Piazza S."/>
            <person name="Reed J."/>
            <person name="Reid J.F."/>
            <person name="Ring B.Z."/>
            <person name="Ringwald M."/>
            <person name="Rost B."/>
            <person name="Ruan Y."/>
            <person name="Salzberg S.L."/>
            <person name="Sandelin A."/>
            <person name="Schneider C."/>
            <person name="Schoenbach C."/>
            <person name="Sekiguchi K."/>
            <person name="Semple C.A."/>
            <person name="Seno S."/>
            <person name="Sessa L."/>
            <person name="Sheng Y."/>
            <person name="Shibata Y."/>
            <person name="Shimada H."/>
            <person name="Shimada K."/>
            <person name="Silva D."/>
            <person name="Sinclair B."/>
            <person name="Sperling S."/>
            <person name="Stupka E."/>
            <person name="Sugiura K."/>
            <person name="Sultana R."/>
            <person name="Takenaka Y."/>
            <person name="Taki K."/>
            <person name="Tammoja K."/>
            <person name="Tan S.L."/>
            <person name="Tang S."/>
            <person name="Taylor M.S."/>
            <person name="Tegner J."/>
            <person name="Teichmann S.A."/>
            <person name="Ueda H.R."/>
            <person name="van Nimwegen E."/>
            <person name="Verardo R."/>
            <person name="Wei C.L."/>
            <person name="Yagi K."/>
            <person name="Yamanishi H."/>
            <person name="Zabarovsky E."/>
            <person name="Zhu S."/>
            <person name="Zimmer A."/>
            <person name="Hide W."/>
            <person name="Bult C."/>
            <person name="Grimmond S.M."/>
            <person name="Teasdale R.D."/>
            <person name="Liu E.T."/>
            <person name="Brusic V."/>
            <person name="Quackenbush J."/>
            <person name="Wahlestedt C."/>
            <person name="Mattick J.S."/>
            <person name="Hume D.A."/>
            <person name="Kai C."/>
            <person name="Sasaki D."/>
            <person name="Tomaru Y."/>
            <person name="Fukuda S."/>
            <person name="Kanamori-Katayama M."/>
            <person name="Suzuki M."/>
            <person name="Aoki J."/>
            <person name="Arakawa T."/>
            <person name="Iida J."/>
            <person name="Imamura K."/>
            <person name="Itoh M."/>
            <person name="Kato T."/>
            <person name="Kawaji H."/>
            <person name="Kawagashira N."/>
            <person name="Kawashima T."/>
            <person name="Kojima M."/>
            <person name="Kondo S."/>
            <person name="Konno H."/>
            <person name="Nakano K."/>
            <person name="Ninomiya N."/>
            <person name="Nishio T."/>
            <person name="Okada M."/>
            <person name="Plessy C."/>
            <person name="Shibata K."/>
            <person name="Shiraki T."/>
            <person name="Suzuki S."/>
            <person name="Tagami M."/>
            <person name="Waki K."/>
            <person name="Watahiki A."/>
            <person name="Okamura-Oho Y."/>
            <person name="Suzuki H."/>
            <person name="Kawai J."/>
            <person name="Hayashizaki Y."/>
        </authorList>
    </citation>
    <scope>NUCLEOTIDE SEQUENCE [LARGE SCALE MRNA] OF 484-740</scope>
    <source>
        <strain>C57BL/6J</strain>
        <tissue>Embryo</tissue>
    </source>
</reference>
<reference key="3">
    <citation type="journal article" date="2009" name="Mol. Cell. Proteomics">
        <title>The mouse C2C12 myoblast cell surface N-linked glycoproteome: identification, glycosite occupancy, and membrane orientation.</title>
        <authorList>
            <person name="Gundry R.L."/>
            <person name="Raginski K."/>
            <person name="Tarasova Y."/>
            <person name="Tchernyshyov I."/>
            <person name="Bausch-Fluck D."/>
            <person name="Elliott S.T."/>
            <person name="Boheler K.R."/>
            <person name="Van Eyk J.E."/>
            <person name="Wollscheid B."/>
        </authorList>
    </citation>
    <scope>GLYCOSYLATION [LARGE SCALE ANALYSIS] AT ASN-314; ASN-449 AND ASN-603</scope>
    <source>
        <tissue>Myoblast</tissue>
    </source>
</reference>
<reference key="4">
    <citation type="journal article" date="2010" name="Cell">
        <title>A tissue-specific atlas of mouse protein phosphorylation and expression.</title>
        <authorList>
            <person name="Huttlin E.L."/>
            <person name="Jedrychowski M.P."/>
            <person name="Elias J.E."/>
            <person name="Goswami T."/>
            <person name="Rad R."/>
            <person name="Beausoleil S.A."/>
            <person name="Villen J."/>
            <person name="Haas W."/>
            <person name="Sowa M.E."/>
            <person name="Gygi S.P."/>
        </authorList>
    </citation>
    <scope>IDENTIFICATION BY MASS SPECTROMETRY [LARGE SCALE ANALYSIS]</scope>
    <source>
        <tissue>Brown adipose tissue</tissue>
        <tissue>Heart</tissue>
        <tissue>Kidney</tissue>
        <tissue>Lung</tissue>
        <tissue>Testis</tissue>
    </source>
</reference>
<dbReference type="EC" id="3.4.17.21"/>
<dbReference type="EMBL" id="AY243507">
    <property type="protein sequence ID" value="AAO89235.1"/>
    <property type="molecule type" value="mRNA"/>
</dbReference>
<dbReference type="EMBL" id="AK012270">
    <property type="protein sequence ID" value="BAB28132.1"/>
    <property type="molecule type" value="mRNA"/>
</dbReference>
<dbReference type="CCDS" id="CCDS52728.1"/>
<dbReference type="RefSeq" id="NP_082555.2">
    <property type="nucleotide sequence ID" value="NM_028279.3"/>
</dbReference>
<dbReference type="SMR" id="Q9CZR2"/>
<dbReference type="FunCoup" id="Q9CZR2">
    <property type="interactions" value="77"/>
</dbReference>
<dbReference type="STRING" id="10090.ENSMUSP00000128674"/>
<dbReference type="MEROPS" id="M28.012"/>
<dbReference type="GlyConnect" id="2524">
    <property type="glycosylation" value="1 N-Linked glycan (1 site)"/>
</dbReference>
<dbReference type="GlyCosmos" id="Q9CZR2">
    <property type="glycosylation" value="7 sites, 1 glycan"/>
</dbReference>
<dbReference type="GlyGen" id="Q9CZR2">
    <property type="glycosylation" value="9 sites, 5 N-linked glycans (4 sites)"/>
</dbReference>
<dbReference type="iPTMnet" id="Q9CZR2"/>
<dbReference type="PhosphoSitePlus" id="Q9CZR2"/>
<dbReference type="SwissPalm" id="Q9CZR2"/>
<dbReference type="PaxDb" id="10090-ENSMUSP00000128674"/>
<dbReference type="ProteomicsDB" id="286148"/>
<dbReference type="Pumba" id="Q9CZR2"/>
<dbReference type="Antibodypedia" id="67811">
    <property type="antibodies" value="45 antibodies from 16 providers"/>
</dbReference>
<dbReference type="DNASU" id="72560"/>
<dbReference type="Ensembl" id="ENSMUST00000166825.8">
    <property type="protein sequence ID" value="ENSMUSP00000128674.2"/>
    <property type="gene ID" value="ENSMUSG00000043943.15"/>
</dbReference>
<dbReference type="GeneID" id="72560"/>
<dbReference type="KEGG" id="mmu:72560"/>
<dbReference type="UCSC" id="uc009ogn.1">
    <property type="organism name" value="mouse"/>
</dbReference>
<dbReference type="AGR" id="MGI:1919810"/>
<dbReference type="CTD" id="10003"/>
<dbReference type="MGI" id="MGI:1919810">
    <property type="gene designation" value="Naalad2"/>
</dbReference>
<dbReference type="VEuPathDB" id="HostDB:ENSMUSG00000043943"/>
<dbReference type="eggNOG" id="KOG2195">
    <property type="taxonomic scope" value="Eukaryota"/>
</dbReference>
<dbReference type="GeneTree" id="ENSGT01030000234598"/>
<dbReference type="HOGENOM" id="CLU_005688_3_2_1"/>
<dbReference type="InParanoid" id="Q9CZR2"/>
<dbReference type="PhylomeDB" id="Q9CZR2"/>
<dbReference type="TreeFam" id="TF312981"/>
<dbReference type="BRENDA" id="3.4.17.21">
    <property type="organism ID" value="3474"/>
</dbReference>
<dbReference type="Reactome" id="R-MMU-8963693">
    <property type="pathway name" value="Aspartate and asparagine metabolism"/>
</dbReference>
<dbReference type="BioGRID-ORCS" id="72560">
    <property type="hits" value="1 hit in 77 CRISPR screens"/>
</dbReference>
<dbReference type="ChiTaRS" id="Naalad2">
    <property type="organism name" value="mouse"/>
</dbReference>
<dbReference type="PRO" id="PR:Q9CZR2"/>
<dbReference type="Proteomes" id="UP000000589">
    <property type="component" value="Chromosome 9"/>
</dbReference>
<dbReference type="RNAct" id="Q9CZR2">
    <property type="molecule type" value="protein"/>
</dbReference>
<dbReference type="Bgee" id="ENSMUSG00000043943">
    <property type="expression patterns" value="Expressed in cleaving embryo and 182 other cell types or tissues"/>
</dbReference>
<dbReference type="ExpressionAtlas" id="Q9CZR2">
    <property type="expression patterns" value="baseline and differential"/>
</dbReference>
<dbReference type="GO" id="GO:0016020">
    <property type="term" value="C:membrane"/>
    <property type="evidence" value="ECO:0000314"/>
    <property type="project" value="MGI"/>
</dbReference>
<dbReference type="GO" id="GO:0005886">
    <property type="term" value="C:plasma membrane"/>
    <property type="evidence" value="ECO:0007669"/>
    <property type="project" value="UniProtKB-SubCell"/>
</dbReference>
<dbReference type="GO" id="GO:0004180">
    <property type="term" value="F:carboxypeptidase activity"/>
    <property type="evidence" value="ECO:0000314"/>
    <property type="project" value="MGI"/>
</dbReference>
<dbReference type="GO" id="GO:0016805">
    <property type="term" value="F:dipeptidase activity"/>
    <property type="evidence" value="ECO:0007669"/>
    <property type="project" value="UniProtKB-KW"/>
</dbReference>
<dbReference type="GO" id="GO:0046872">
    <property type="term" value="F:metal ion binding"/>
    <property type="evidence" value="ECO:0007669"/>
    <property type="project" value="UniProtKB-KW"/>
</dbReference>
<dbReference type="GO" id="GO:0004181">
    <property type="term" value="F:metallocarboxypeptidase activity"/>
    <property type="evidence" value="ECO:0007669"/>
    <property type="project" value="UniProtKB-EC"/>
</dbReference>
<dbReference type="GO" id="GO:0050129">
    <property type="term" value="F:N-formylglutamate deformylase activity"/>
    <property type="evidence" value="ECO:0000314"/>
    <property type="project" value="MGI"/>
</dbReference>
<dbReference type="GO" id="GO:0008233">
    <property type="term" value="F:peptidase activity"/>
    <property type="evidence" value="ECO:0000314"/>
    <property type="project" value="MGI"/>
</dbReference>
<dbReference type="GO" id="GO:0046395">
    <property type="term" value="P:carboxylic acid catabolic process"/>
    <property type="evidence" value="ECO:0000314"/>
    <property type="project" value="MGI"/>
</dbReference>
<dbReference type="GO" id="GO:0009056">
    <property type="term" value="P:catabolic process"/>
    <property type="evidence" value="ECO:0000314"/>
    <property type="project" value="MGI"/>
</dbReference>
<dbReference type="GO" id="GO:0006508">
    <property type="term" value="P:proteolysis"/>
    <property type="evidence" value="ECO:0000314"/>
    <property type="project" value="MGI"/>
</dbReference>
<dbReference type="CDD" id="cd08022">
    <property type="entry name" value="M28_PSMA_like"/>
    <property type="match status" value="1"/>
</dbReference>
<dbReference type="CDD" id="cd02121">
    <property type="entry name" value="PA_GCPII_like"/>
    <property type="match status" value="1"/>
</dbReference>
<dbReference type="FunFam" id="3.40.630.10:FF:000291">
    <property type="entry name" value="N-acetylated alpha-linked acidic dipeptidase 2"/>
    <property type="match status" value="1"/>
</dbReference>
<dbReference type="FunFam" id="1.20.930.40:FF:000001">
    <property type="entry name" value="N-acetylated-alpha-linked acidic dipeptidase 2"/>
    <property type="match status" value="1"/>
</dbReference>
<dbReference type="FunFam" id="3.50.30.30:FF:000002">
    <property type="entry name" value="N-acetylated-alpha-linked acidic dipeptidase 2"/>
    <property type="match status" value="1"/>
</dbReference>
<dbReference type="Gene3D" id="3.50.30.30">
    <property type="match status" value="1"/>
</dbReference>
<dbReference type="Gene3D" id="1.20.930.40">
    <property type="entry name" value="Transferrin receptor-like, dimerisation domain"/>
    <property type="match status" value="1"/>
</dbReference>
<dbReference type="Gene3D" id="3.40.630.10">
    <property type="entry name" value="Zn peptidases"/>
    <property type="match status" value="1"/>
</dbReference>
<dbReference type="InterPro" id="IPR046450">
    <property type="entry name" value="PA_dom_sf"/>
</dbReference>
<dbReference type="InterPro" id="IPR003137">
    <property type="entry name" value="PA_domain"/>
</dbReference>
<dbReference type="InterPro" id="IPR007484">
    <property type="entry name" value="Peptidase_M28"/>
</dbReference>
<dbReference type="InterPro" id="IPR039373">
    <property type="entry name" value="Peptidase_M28B"/>
</dbReference>
<dbReference type="InterPro" id="IPR007365">
    <property type="entry name" value="TFR-like_dimer_dom"/>
</dbReference>
<dbReference type="InterPro" id="IPR036757">
    <property type="entry name" value="TFR-like_dimer_dom_sf"/>
</dbReference>
<dbReference type="PANTHER" id="PTHR10404">
    <property type="entry name" value="N-ACETYLATED-ALPHA-LINKED ACIDIC DIPEPTIDASE"/>
    <property type="match status" value="1"/>
</dbReference>
<dbReference type="PANTHER" id="PTHR10404:SF38">
    <property type="entry name" value="N-ACETYLATED-ALPHA-LINKED ACIDIC DIPEPTIDASE 2"/>
    <property type="match status" value="1"/>
</dbReference>
<dbReference type="Pfam" id="PF02225">
    <property type="entry name" value="PA"/>
    <property type="match status" value="1"/>
</dbReference>
<dbReference type="Pfam" id="PF04389">
    <property type="entry name" value="Peptidase_M28"/>
    <property type="match status" value="1"/>
</dbReference>
<dbReference type="Pfam" id="PF04253">
    <property type="entry name" value="TFR_dimer"/>
    <property type="match status" value="1"/>
</dbReference>
<dbReference type="SUPFAM" id="SSF52025">
    <property type="entry name" value="PA domain"/>
    <property type="match status" value="1"/>
</dbReference>
<dbReference type="SUPFAM" id="SSF47672">
    <property type="entry name" value="Transferrin receptor-like dimerisation domain"/>
    <property type="match status" value="1"/>
</dbReference>
<dbReference type="SUPFAM" id="SSF53187">
    <property type="entry name" value="Zn-dependent exopeptidases"/>
    <property type="match status" value="1"/>
</dbReference>
<protein>
    <recommendedName>
        <fullName>N-acetylated-alpha-linked acidic dipeptidase 2</fullName>
        <ecNumber>3.4.17.21</ecNumber>
    </recommendedName>
    <alternativeName>
        <fullName>Glutamate carboxypeptidase III</fullName>
        <shortName>GCPIII</shortName>
    </alternativeName>
    <alternativeName>
        <fullName>N-acetylaspartylglutamate peptidase II</fullName>
        <shortName>NAAG-peptidase II</shortName>
    </alternativeName>
    <alternativeName>
        <fullName>N-acetylated-alpha-linked acidic dipeptidase II</fullName>
        <shortName>NAALADase II</shortName>
    </alternativeName>
</protein>
<organism>
    <name type="scientific">Mus musculus</name>
    <name type="common">Mouse</name>
    <dbReference type="NCBI Taxonomy" id="10090"/>
    <lineage>
        <taxon>Eukaryota</taxon>
        <taxon>Metazoa</taxon>
        <taxon>Chordata</taxon>
        <taxon>Craniata</taxon>
        <taxon>Vertebrata</taxon>
        <taxon>Euteleostomi</taxon>
        <taxon>Mammalia</taxon>
        <taxon>Eutheria</taxon>
        <taxon>Euarchontoglires</taxon>
        <taxon>Glires</taxon>
        <taxon>Rodentia</taxon>
        <taxon>Myomorpha</taxon>
        <taxon>Muroidea</taxon>
        <taxon>Muridae</taxon>
        <taxon>Murinae</taxon>
        <taxon>Mus</taxon>
        <taxon>Mus</taxon>
    </lineage>
</organism>
<accession>Q9CZR2</accession>
<accession>Q80YF8</accession>
<comment type="function">
    <text evidence="5">Has N-acetylated-alpha-linked-acidic dipeptidase (NAALADase) activity. Also exhibits a dipeptidyl-peptidase IV type activity. Inactivates the peptide neurotransmitter N-acetylaspartylglutamate.</text>
</comment>
<comment type="catalytic activity">
    <reaction>
        <text>Release of an unsubstituted, C-terminal glutamyl residue, typically from Ac-Asp-Glu or folylpoly-gamma-glutamates.</text>
        <dbReference type="EC" id="3.4.17.21"/>
    </reaction>
</comment>
<comment type="cofactor">
    <cofactor evidence="1">
        <name>Zn(2+)</name>
        <dbReference type="ChEBI" id="CHEBI:29105"/>
    </cofactor>
    <text evidence="1">Binds 2 Zn(2+) ions per subunit. Required for NAALADase activity.</text>
</comment>
<comment type="subunit">
    <text evidence="1">Homodimer.</text>
</comment>
<comment type="subcellular location">
    <subcellularLocation>
        <location evidence="2">Cell membrane</location>
        <topology evidence="2">Single-pass type II membrane protein</topology>
    </subcellularLocation>
</comment>
<comment type="tissue specificity">
    <text evidence="5">Expressed ovary, testes and lung, but not brain.</text>
</comment>
<comment type="domain">
    <text>The NAALADase activity is found in the central region, the dipeptidyl peptidase IV type activity in the C-terminal.</text>
</comment>
<comment type="similarity">
    <text evidence="7">Belongs to the peptidase M28 family. M28B subfamily.</text>
</comment>
<proteinExistence type="evidence at protein level"/>
<sequence>MARPRHLRGLGMCITAVLASFIAGFTVGWFIKPLKETTTSAGYHQSIQQKLLSEMKAENIRSFLRSFTKLPHLAGTEQNLLLAKKIQTQWKKFGLDSANLVHYDVLLSYPNETNANYVSIVDEHGVEIFKTSYLEPPPDGYENVTNIIPPYNAFSASGMPEGELVYVNYARTEDFFKLEREMNINCTGKIVIARYGKIFRGNKVKNAMLAGAMGIILYSDPADYFAPDVQPYPKGWNLPGAAAQRGNVLNLNGAGDPLTPGYPAKEYTFRLPVEEAVGIPNIPVHPIGYNDAERLLRNLGGAAPPDKSWKGSLNVSYNIGPGFTGSEYSRNIRMHVNNINKITRIYNVIGTIRGSTEPDRYVILGGHRDSWVFGGIDPTTGTAVLQEIARSFGKLVNGGWRPRRTIIFASWDAEEFGLLGSTEWAEENAKLLQERSIAYINSDSAIEGNYTLRVDCTPLLNQLVYKVAREISSPDDGFESKSLYESWLEKDPSPENKECPRINKLGSGSDFEAYFQRLGIASGRARYTKNKKTDKYSSYPVYHTIYETFELVQNFYDPTFKKQLSVAQLRGALVYELADSVVIPFNIQDYAKALKNYAASIFNISKKHDQQLRNHAVSFDPLFSAVKNFSEAASDFHRRLTQVDLNNPIAVRIMNDQQMLLERAFIDPLGLPGRKFYRHIIFAPSSHNKYAGESFPGIYDAMFDIENKADPSLAWAEVKKHISIAAFTIQAAAGTLTNVL</sequence>
<feature type="chain" id="PRO_0000174122" description="N-acetylated-alpha-linked acidic dipeptidase 2">
    <location>
        <begin position="1"/>
        <end position="740"/>
    </location>
</feature>
<feature type="topological domain" description="Cytoplasmic" evidence="4">
    <location>
        <begin position="1"/>
        <end position="7"/>
    </location>
</feature>
<feature type="transmembrane region" description="Helical; Signal-anchor for type II membrane protein" evidence="4">
    <location>
        <begin position="8"/>
        <end position="31"/>
    </location>
</feature>
<feature type="topological domain" description="Extracellular" evidence="4">
    <location>
        <begin position="32"/>
        <end position="740"/>
    </location>
</feature>
<feature type="region of interest" description="NAALADase">
    <location>
        <begin position="264"/>
        <end position="577"/>
    </location>
</feature>
<feature type="active site" description="Nucleophile; for NAALADase activity" evidence="1">
    <location>
        <position position="414"/>
    </location>
</feature>
<feature type="active site" description="Charge relay system" evidence="4">
    <location>
        <position position="618"/>
    </location>
</feature>
<feature type="active site" description="Charge relay system" evidence="4">
    <location>
        <position position="656"/>
    </location>
</feature>
<feature type="active site" description="Charge relay system" evidence="4">
    <location>
        <position position="679"/>
    </location>
</feature>
<feature type="binding site" evidence="3">
    <location>
        <position position="200"/>
    </location>
    <ligand>
        <name>substrate</name>
    </ligand>
</feature>
<feature type="binding site" evidence="3">
    <location>
        <position position="247"/>
    </location>
    <ligand>
        <name>substrate</name>
    </ligand>
</feature>
<feature type="binding site" evidence="2">
    <location>
        <position position="259"/>
    </location>
    <ligand>
        <name>Ca(2+)</name>
        <dbReference type="ChEBI" id="CHEBI:29108"/>
    </ligand>
</feature>
<feature type="binding site" evidence="2">
    <location>
        <position position="262"/>
    </location>
    <ligand>
        <name>Ca(2+)</name>
        <dbReference type="ChEBI" id="CHEBI:29108"/>
    </ligand>
</feature>
<feature type="binding site" evidence="3">
    <location>
        <position position="367"/>
    </location>
    <ligand>
        <name>Zn(2+)</name>
        <dbReference type="ChEBI" id="CHEBI:29105"/>
        <label>1</label>
        <note>catalytic</note>
    </ligand>
</feature>
<feature type="binding site" evidence="3">
    <location>
        <position position="377"/>
    </location>
    <ligand>
        <name>Zn(2+)</name>
        <dbReference type="ChEBI" id="CHEBI:29105"/>
        <label>1</label>
        <note>catalytic</note>
    </ligand>
</feature>
<feature type="binding site" evidence="2">
    <location>
        <position position="377"/>
    </location>
    <ligand>
        <name>Zn(2+)</name>
        <dbReference type="ChEBI" id="CHEBI:29105"/>
        <label>2</label>
    </ligand>
</feature>
<feature type="binding site" evidence="3">
    <location>
        <position position="414"/>
    </location>
    <ligand>
        <name>substrate</name>
    </ligand>
</feature>
<feature type="binding site" evidence="2">
    <location>
        <position position="415"/>
    </location>
    <ligand>
        <name>Zn(2+)</name>
        <dbReference type="ChEBI" id="CHEBI:29105"/>
        <label>2</label>
    </ligand>
</feature>
<feature type="binding site" evidence="2">
    <location>
        <position position="423"/>
    </location>
    <ligand>
        <name>Ca(2+)</name>
        <dbReference type="ChEBI" id="CHEBI:29108"/>
    </ligand>
</feature>
<feature type="binding site" evidence="2">
    <location>
        <position position="426"/>
    </location>
    <ligand>
        <name>Ca(2+)</name>
        <dbReference type="ChEBI" id="CHEBI:29108"/>
    </ligand>
</feature>
<feature type="binding site" evidence="3">
    <location>
        <position position="443"/>
    </location>
    <ligand>
        <name>Zn(2+)</name>
        <dbReference type="ChEBI" id="CHEBI:29105"/>
        <label>1</label>
        <note>catalytic</note>
    </ligand>
</feature>
<feature type="binding site" evidence="3">
    <location>
        <begin position="507"/>
        <end position="508"/>
    </location>
    <ligand>
        <name>substrate</name>
    </ligand>
</feature>
<feature type="binding site" evidence="2">
    <location>
        <begin position="524"/>
        <end position="526"/>
    </location>
    <ligand>
        <name>substrate</name>
    </ligand>
</feature>
<feature type="binding site" evidence="3">
    <location>
        <begin position="542"/>
        <end position="543"/>
    </location>
    <ligand>
        <name>substrate</name>
    </ligand>
</feature>
<feature type="binding site" evidence="2">
    <location>
        <position position="542"/>
    </location>
    <ligand>
        <name>substrate</name>
    </ligand>
</feature>
<feature type="binding site" evidence="2">
    <location>
        <position position="543"/>
    </location>
    <ligand>
        <name>Zn(2+)</name>
        <dbReference type="ChEBI" id="CHEBI:29105"/>
        <label>2</label>
    </ligand>
</feature>
<feature type="binding site" evidence="3">
    <location>
        <begin position="689"/>
        <end position="690"/>
    </location>
    <ligand>
        <name>substrate</name>
    </ligand>
</feature>
<feature type="glycosylation site" description="N-linked (GlcNAc...) asparagine" evidence="2">
    <location>
        <position position="111"/>
    </location>
</feature>
<feature type="glycosylation site" description="N-linked (GlcNAc...) asparagine" evidence="2">
    <location>
        <position position="143"/>
    </location>
</feature>
<feature type="glycosylation site" description="N-linked (GlcNAc...) asparagine" evidence="2">
    <location>
        <position position="185"/>
    </location>
</feature>
<feature type="glycosylation site" description="N-linked (GlcNAc...) asparagine" evidence="6">
    <location>
        <position position="314"/>
    </location>
</feature>
<feature type="glycosylation site" description="N-linked (GlcNAc...) asparagine" evidence="6">
    <location>
        <position position="449"/>
    </location>
</feature>
<feature type="glycosylation site" description="N-linked (GlcNAc...) asparagine" evidence="6">
    <location>
        <position position="603"/>
    </location>
</feature>
<feature type="glycosylation site" description="N-linked (GlcNAc...) asparagine" evidence="2">
    <location>
        <position position="628"/>
    </location>
</feature>
<feature type="sequence conflict" description="In Ref. 2; BAB28132." evidence="7" ref="2">
    <original>YESW</original>
    <variation>MKAG</variation>
    <location>
        <begin position="484"/>
        <end position="487"/>
    </location>
</feature>
<feature type="sequence conflict" description="In Ref. 2; BAB28132." evidence="7" ref="2">
    <original>C</original>
    <variation>L</variation>
    <location>
        <position position="499"/>
    </location>
</feature>
<keyword id="KW-0121">Carboxypeptidase</keyword>
<keyword id="KW-1003">Cell membrane</keyword>
<keyword id="KW-0224">Dipeptidase</keyword>
<keyword id="KW-0325">Glycoprotein</keyword>
<keyword id="KW-0378">Hydrolase</keyword>
<keyword id="KW-0472">Membrane</keyword>
<keyword id="KW-0479">Metal-binding</keyword>
<keyword id="KW-0482">Metalloprotease</keyword>
<keyword id="KW-0511">Multifunctional enzyme</keyword>
<keyword id="KW-0645">Protease</keyword>
<keyword id="KW-1185">Reference proteome</keyword>
<keyword id="KW-0735">Signal-anchor</keyword>
<keyword id="KW-0812">Transmembrane</keyword>
<keyword id="KW-1133">Transmembrane helix</keyword>
<keyword id="KW-0862">Zinc</keyword>